<accession>Q2SY32</accession>
<proteinExistence type="inferred from homology"/>
<name>UBIG_BURTA</name>
<keyword id="KW-0489">Methyltransferase</keyword>
<keyword id="KW-0949">S-adenosyl-L-methionine</keyword>
<keyword id="KW-0808">Transferase</keyword>
<keyword id="KW-0831">Ubiquinone biosynthesis</keyword>
<reference key="1">
    <citation type="journal article" date="2005" name="BMC Genomics">
        <title>Bacterial genome adaptation to niches: divergence of the potential virulence genes in three Burkholderia species of different survival strategies.</title>
        <authorList>
            <person name="Kim H.S."/>
            <person name="Schell M.A."/>
            <person name="Yu Y."/>
            <person name="Ulrich R.L."/>
            <person name="Sarria S.H."/>
            <person name="Nierman W.C."/>
            <person name="DeShazer D."/>
        </authorList>
    </citation>
    <scope>NUCLEOTIDE SEQUENCE [LARGE SCALE GENOMIC DNA]</scope>
    <source>
        <strain>ATCC 700388 / DSM 13276 / CCUG 48851 / CIP 106301 / E264</strain>
    </source>
</reference>
<feature type="chain" id="PRO_0000241706" description="Ubiquinone biosynthesis O-methyltransferase">
    <location>
        <begin position="1"/>
        <end position="232"/>
    </location>
</feature>
<feature type="binding site" evidence="1">
    <location>
        <position position="36"/>
    </location>
    <ligand>
        <name>S-adenosyl-L-methionine</name>
        <dbReference type="ChEBI" id="CHEBI:59789"/>
    </ligand>
</feature>
<feature type="binding site" evidence="1">
    <location>
        <position position="55"/>
    </location>
    <ligand>
        <name>S-adenosyl-L-methionine</name>
        <dbReference type="ChEBI" id="CHEBI:59789"/>
    </ligand>
</feature>
<feature type="binding site" evidence="1">
    <location>
        <position position="76"/>
    </location>
    <ligand>
        <name>S-adenosyl-L-methionine</name>
        <dbReference type="ChEBI" id="CHEBI:59789"/>
    </ligand>
</feature>
<feature type="binding site" evidence="1">
    <location>
        <position position="120"/>
    </location>
    <ligand>
        <name>S-adenosyl-L-methionine</name>
        <dbReference type="ChEBI" id="CHEBI:59789"/>
    </ligand>
</feature>
<comment type="function">
    <text evidence="1">O-methyltransferase that catalyzes the 2 O-methylation steps in the ubiquinone biosynthetic pathway.</text>
</comment>
<comment type="catalytic activity">
    <reaction evidence="1">
        <text>a 3-demethylubiquinol + S-adenosyl-L-methionine = a ubiquinol + S-adenosyl-L-homocysteine + H(+)</text>
        <dbReference type="Rhea" id="RHEA:44380"/>
        <dbReference type="Rhea" id="RHEA-COMP:9566"/>
        <dbReference type="Rhea" id="RHEA-COMP:10914"/>
        <dbReference type="ChEBI" id="CHEBI:15378"/>
        <dbReference type="ChEBI" id="CHEBI:17976"/>
        <dbReference type="ChEBI" id="CHEBI:57856"/>
        <dbReference type="ChEBI" id="CHEBI:59789"/>
        <dbReference type="ChEBI" id="CHEBI:84422"/>
        <dbReference type="EC" id="2.1.1.64"/>
    </reaction>
</comment>
<comment type="catalytic activity">
    <reaction evidence="1">
        <text>a 3-(all-trans-polyprenyl)benzene-1,2-diol + S-adenosyl-L-methionine = a 2-methoxy-6-(all-trans-polyprenyl)phenol + S-adenosyl-L-homocysteine + H(+)</text>
        <dbReference type="Rhea" id="RHEA:31411"/>
        <dbReference type="Rhea" id="RHEA-COMP:9550"/>
        <dbReference type="Rhea" id="RHEA-COMP:9551"/>
        <dbReference type="ChEBI" id="CHEBI:15378"/>
        <dbReference type="ChEBI" id="CHEBI:57856"/>
        <dbReference type="ChEBI" id="CHEBI:59789"/>
        <dbReference type="ChEBI" id="CHEBI:62729"/>
        <dbReference type="ChEBI" id="CHEBI:62731"/>
        <dbReference type="EC" id="2.1.1.222"/>
    </reaction>
</comment>
<comment type="pathway">
    <text evidence="1">Cofactor biosynthesis; ubiquinone biosynthesis.</text>
</comment>
<comment type="similarity">
    <text evidence="1">Belongs to the methyltransferase superfamily. UbiG/COQ3 family.</text>
</comment>
<dbReference type="EC" id="2.1.1.222" evidence="1"/>
<dbReference type="EC" id="2.1.1.64" evidence="1"/>
<dbReference type="EMBL" id="CP000086">
    <property type="protein sequence ID" value="ABC37743.1"/>
    <property type="molecule type" value="Genomic_DNA"/>
</dbReference>
<dbReference type="RefSeq" id="WP_009889828.1">
    <property type="nucleotide sequence ID" value="NZ_CP008785.1"/>
</dbReference>
<dbReference type="SMR" id="Q2SY32"/>
<dbReference type="GeneID" id="45121362"/>
<dbReference type="KEGG" id="bte:BTH_I1630"/>
<dbReference type="HOGENOM" id="CLU_042432_5_0_4"/>
<dbReference type="UniPathway" id="UPA00232"/>
<dbReference type="Proteomes" id="UP000001930">
    <property type="component" value="Chromosome I"/>
</dbReference>
<dbReference type="GO" id="GO:0102208">
    <property type="term" value="F:2-polyprenyl-6-hydroxyphenol methylase activity"/>
    <property type="evidence" value="ECO:0007669"/>
    <property type="project" value="UniProtKB-EC"/>
</dbReference>
<dbReference type="GO" id="GO:0061542">
    <property type="term" value="F:3-demethylubiquinol 3-O-methyltransferase activity"/>
    <property type="evidence" value="ECO:0007669"/>
    <property type="project" value="UniProtKB-UniRule"/>
</dbReference>
<dbReference type="GO" id="GO:0010420">
    <property type="term" value="F:polyprenyldihydroxybenzoate methyltransferase activity"/>
    <property type="evidence" value="ECO:0007669"/>
    <property type="project" value="InterPro"/>
</dbReference>
<dbReference type="GO" id="GO:0032259">
    <property type="term" value="P:methylation"/>
    <property type="evidence" value="ECO:0007669"/>
    <property type="project" value="UniProtKB-KW"/>
</dbReference>
<dbReference type="CDD" id="cd02440">
    <property type="entry name" value="AdoMet_MTases"/>
    <property type="match status" value="1"/>
</dbReference>
<dbReference type="FunFam" id="3.40.50.150:FF:000028">
    <property type="entry name" value="Ubiquinone biosynthesis O-methyltransferase"/>
    <property type="match status" value="1"/>
</dbReference>
<dbReference type="Gene3D" id="3.40.50.150">
    <property type="entry name" value="Vaccinia Virus protein VP39"/>
    <property type="match status" value="1"/>
</dbReference>
<dbReference type="HAMAP" id="MF_00472">
    <property type="entry name" value="UbiG"/>
    <property type="match status" value="1"/>
</dbReference>
<dbReference type="InterPro" id="IPR029063">
    <property type="entry name" value="SAM-dependent_MTases_sf"/>
</dbReference>
<dbReference type="InterPro" id="IPR010233">
    <property type="entry name" value="UbiG_MeTrfase"/>
</dbReference>
<dbReference type="NCBIfam" id="TIGR01983">
    <property type="entry name" value="UbiG"/>
    <property type="match status" value="1"/>
</dbReference>
<dbReference type="PANTHER" id="PTHR43464">
    <property type="entry name" value="METHYLTRANSFERASE"/>
    <property type="match status" value="1"/>
</dbReference>
<dbReference type="PANTHER" id="PTHR43464:SF19">
    <property type="entry name" value="UBIQUINONE BIOSYNTHESIS O-METHYLTRANSFERASE, MITOCHONDRIAL"/>
    <property type="match status" value="1"/>
</dbReference>
<dbReference type="Pfam" id="PF13489">
    <property type="entry name" value="Methyltransf_23"/>
    <property type="match status" value="1"/>
</dbReference>
<dbReference type="SUPFAM" id="SSF53335">
    <property type="entry name" value="S-adenosyl-L-methionine-dependent methyltransferases"/>
    <property type="match status" value="1"/>
</dbReference>
<protein>
    <recommendedName>
        <fullName evidence="1">Ubiquinone biosynthesis O-methyltransferase</fullName>
    </recommendedName>
    <alternativeName>
        <fullName evidence="1">2-polyprenyl-6-hydroxyphenol methylase</fullName>
        <ecNumber evidence="1">2.1.1.222</ecNumber>
    </alternativeName>
    <alternativeName>
        <fullName evidence="1">3-demethylubiquinone 3-O-methyltransferase</fullName>
        <ecNumber evidence="1">2.1.1.64</ecNumber>
    </alternativeName>
</protein>
<organism>
    <name type="scientific">Burkholderia thailandensis (strain ATCC 700388 / DSM 13276 / CCUG 48851 / CIP 106301 / E264)</name>
    <dbReference type="NCBI Taxonomy" id="271848"/>
    <lineage>
        <taxon>Bacteria</taxon>
        <taxon>Pseudomonadati</taxon>
        <taxon>Pseudomonadota</taxon>
        <taxon>Betaproteobacteria</taxon>
        <taxon>Burkholderiales</taxon>
        <taxon>Burkholderiaceae</taxon>
        <taxon>Burkholderia</taxon>
        <taxon>pseudomallei group</taxon>
    </lineage>
</organism>
<gene>
    <name evidence="1" type="primary">ubiG</name>
    <name type="ordered locus">BTH_I1630</name>
</gene>
<sequence length="232" mass="25240">MTNADPHELQKFSDLAHKWWDPNAEFKPLHDLNPIRLNWIDAHAHLPGKRVVDIGCGGGILSESMASLGAQVKGIDLATEALGVADLHSLESGVSVDYEAIAAEALAAREPGAYDVVTCMEMLEHVPSPANIVAACATLVKPGGWVFFSTLNRNLKSYLLAVIGAEYIAQMLPKGTHDYARFIRPSELAHFVRAAGLQLVEIKGITYHPLAKRFALSNDTDVNYLVACRRSV</sequence>
<evidence type="ECO:0000255" key="1">
    <source>
        <dbReference type="HAMAP-Rule" id="MF_00472"/>
    </source>
</evidence>